<organism>
    <name type="scientific">Cronobacter sakazakii (strain ATCC BAA-894)</name>
    <name type="common">Enterobacter sakazakii</name>
    <dbReference type="NCBI Taxonomy" id="290339"/>
    <lineage>
        <taxon>Bacteria</taxon>
        <taxon>Pseudomonadati</taxon>
        <taxon>Pseudomonadota</taxon>
        <taxon>Gammaproteobacteria</taxon>
        <taxon>Enterobacterales</taxon>
        <taxon>Enterobacteriaceae</taxon>
        <taxon>Cronobacter</taxon>
    </lineage>
</organism>
<reference key="1">
    <citation type="journal article" date="2010" name="PLoS ONE">
        <title>Genome sequence of Cronobacter sakazakii BAA-894 and comparative genomic hybridization analysis with other Cronobacter species.</title>
        <authorList>
            <person name="Kucerova E."/>
            <person name="Clifton S.W."/>
            <person name="Xia X.Q."/>
            <person name="Long F."/>
            <person name="Porwollik S."/>
            <person name="Fulton L."/>
            <person name="Fronick C."/>
            <person name="Minx P."/>
            <person name="Kyung K."/>
            <person name="Warren W."/>
            <person name="Fulton R."/>
            <person name="Feng D."/>
            <person name="Wollam A."/>
            <person name="Shah N."/>
            <person name="Bhonagiri V."/>
            <person name="Nash W.E."/>
            <person name="Hallsworth-Pepin K."/>
            <person name="Wilson R.K."/>
            <person name="McClelland M."/>
            <person name="Forsythe S.J."/>
        </authorList>
    </citation>
    <scope>NUCLEOTIDE SEQUENCE [LARGE SCALE GENOMIC DNA]</scope>
    <source>
        <strain>ATCC BAA-894</strain>
    </source>
</reference>
<name>Y924_CROS8</name>
<proteinExistence type="inferred from homology"/>
<protein>
    <recommendedName>
        <fullName evidence="1">UPF0208 membrane protein ESA_00924</fullName>
    </recommendedName>
</protein>
<evidence type="ECO:0000255" key="1">
    <source>
        <dbReference type="HAMAP-Rule" id="MF_01101"/>
    </source>
</evidence>
<feature type="chain" id="PRO_1000064973" description="UPF0208 membrane protein ESA_00924">
    <location>
        <begin position="1"/>
        <end position="151"/>
    </location>
</feature>
<feature type="transmembrane region" description="Helical" evidence="1">
    <location>
        <begin position="46"/>
        <end position="65"/>
    </location>
</feature>
<feature type="transmembrane region" description="Helical" evidence="1">
    <location>
        <begin position="69"/>
        <end position="91"/>
    </location>
</feature>
<dbReference type="EMBL" id="CP000783">
    <property type="protein sequence ID" value="ABU76194.1"/>
    <property type="molecule type" value="Genomic_DNA"/>
</dbReference>
<dbReference type="KEGG" id="esa:ESA_00924"/>
<dbReference type="HOGENOM" id="CLU_128746_0_0_6"/>
<dbReference type="Proteomes" id="UP000000260">
    <property type="component" value="Chromosome"/>
</dbReference>
<dbReference type="GO" id="GO:0005886">
    <property type="term" value="C:plasma membrane"/>
    <property type="evidence" value="ECO:0007669"/>
    <property type="project" value="UniProtKB-SubCell"/>
</dbReference>
<dbReference type="HAMAP" id="MF_01101">
    <property type="entry name" value="UPF0208"/>
    <property type="match status" value="1"/>
</dbReference>
<dbReference type="InterPro" id="IPR007334">
    <property type="entry name" value="UPF0208"/>
</dbReference>
<dbReference type="NCBIfam" id="NF002493">
    <property type="entry name" value="PRK01816.1"/>
    <property type="match status" value="1"/>
</dbReference>
<dbReference type="Pfam" id="PF04217">
    <property type="entry name" value="DUF412"/>
    <property type="match status" value="1"/>
</dbReference>
<comment type="subcellular location">
    <subcellularLocation>
        <location evidence="1">Cell inner membrane</location>
        <topology evidence="1">Multi-pass membrane protein</topology>
    </subcellularLocation>
</comment>
<comment type="similarity">
    <text evidence="1">Belongs to the UPF0208 family.</text>
</comment>
<gene>
    <name type="ordered locus">ESA_00924</name>
</gene>
<sequence length="151" mass="17094">MSTPENRPVSFFSLFRRGQHYSKTWPTDKRLAPVFIENRVIRATRFAIRIMPPVAVFTLCWQIALGGQLGPAVATALFALSMPMQGLWWLGKRSVTPLPPGTLNWFYEVRTKLQEAGQALAPVEGKPDYQALADTLKRAFKQLDKTFLDDL</sequence>
<keyword id="KW-0997">Cell inner membrane</keyword>
<keyword id="KW-1003">Cell membrane</keyword>
<keyword id="KW-0472">Membrane</keyword>
<keyword id="KW-1185">Reference proteome</keyword>
<keyword id="KW-0812">Transmembrane</keyword>
<keyword id="KW-1133">Transmembrane helix</keyword>
<accession>A7MH29</accession>